<sequence length="236" mass="24923">MVLSGRGMLDGGADDVGLWLGMQDFLVFCESAMYATCPLCGLFSDSPKEGRSGGGGGSEGQRTDSRLQLPTTSIVDSPGKRSLCVRASDGAGERDAGRAAAAPVRERLWLLRLCQHPRPLLQVLPRQPPPDRDVPGAVVIVVHGASRRGTVPEGIPVDEGAMPPPPPPRAKTKSRCAACGRRVGLMGFECRCGAVFCGAHPLLGQARLWLRLQGRAGRDAIARANPVVSADKVDKL</sequence>
<keyword id="KW-0479">Metal-binding</keyword>
<keyword id="KW-1185">Reference proteome</keyword>
<keyword id="KW-0346">Stress response</keyword>
<keyword id="KW-0862">Zinc</keyword>
<keyword id="KW-0863">Zinc-finger</keyword>
<proteinExistence type="evidence at transcript level"/>
<dbReference type="EMBL" id="AP003288">
    <property type="protein sequence ID" value="BAD87392.1"/>
    <property type="molecule type" value="Genomic_DNA"/>
</dbReference>
<dbReference type="EMBL" id="AP003453">
    <property type="protein sequence ID" value="BAD87750.1"/>
    <property type="molecule type" value="Genomic_DNA"/>
</dbReference>
<dbReference type="EMBL" id="AP014957">
    <property type="status" value="NOT_ANNOTATED_CDS"/>
    <property type="molecule type" value="Genomic_DNA"/>
</dbReference>
<dbReference type="STRING" id="39947.Q5JLA7"/>
<dbReference type="PaxDb" id="39947-Q5JLA7"/>
<dbReference type="eggNOG" id="KOG3173">
    <property type="taxonomic scope" value="Eukaryota"/>
</dbReference>
<dbReference type="HOGENOM" id="CLU_102812_0_0_1"/>
<dbReference type="InParanoid" id="Q5JLA7"/>
<dbReference type="Proteomes" id="UP000000763">
    <property type="component" value="Chromosome 1"/>
</dbReference>
<dbReference type="Proteomes" id="UP000059680">
    <property type="component" value="Chromosome 1"/>
</dbReference>
<dbReference type="GO" id="GO:0008270">
    <property type="term" value="F:zinc ion binding"/>
    <property type="evidence" value="ECO:0007669"/>
    <property type="project" value="UniProtKB-KW"/>
</dbReference>
<dbReference type="Gene3D" id="4.10.1110.10">
    <property type="entry name" value="AN1-like Zinc finger"/>
    <property type="match status" value="1"/>
</dbReference>
<dbReference type="InterPro" id="IPR035896">
    <property type="entry name" value="AN1-like_Znf"/>
</dbReference>
<dbReference type="InterPro" id="IPR050652">
    <property type="entry name" value="AN1_A20_ZnFinger"/>
</dbReference>
<dbReference type="InterPro" id="IPR000058">
    <property type="entry name" value="Znf_AN1"/>
</dbReference>
<dbReference type="PANTHER" id="PTHR10634">
    <property type="entry name" value="AN1-TYPE ZINC FINGER PROTEIN"/>
    <property type="match status" value="1"/>
</dbReference>
<dbReference type="PANTHER" id="PTHR10634:SF142">
    <property type="entry name" value="ZINC FINGER A20 AND AN1 DOMAIN-CONTAINING STRESS-ASSOCIATED PROTEIN 2"/>
    <property type="match status" value="1"/>
</dbReference>
<dbReference type="SMART" id="SM00154">
    <property type="entry name" value="ZnF_AN1"/>
    <property type="match status" value="1"/>
</dbReference>
<dbReference type="SUPFAM" id="SSF118310">
    <property type="entry name" value="AN1-like Zinc finger"/>
    <property type="match status" value="1"/>
</dbReference>
<dbReference type="PROSITE" id="PS51039">
    <property type="entry name" value="ZF_AN1"/>
    <property type="match status" value="1"/>
</dbReference>
<reference key="1">
    <citation type="journal article" date="2002" name="Nature">
        <title>The genome sequence and structure of rice chromosome 1.</title>
        <authorList>
            <person name="Sasaki T."/>
            <person name="Matsumoto T."/>
            <person name="Yamamoto K."/>
            <person name="Sakata K."/>
            <person name="Baba T."/>
            <person name="Katayose Y."/>
            <person name="Wu J."/>
            <person name="Niimura Y."/>
            <person name="Cheng Z."/>
            <person name="Nagamura Y."/>
            <person name="Antonio B.A."/>
            <person name="Kanamori H."/>
            <person name="Hosokawa S."/>
            <person name="Masukawa M."/>
            <person name="Arikawa K."/>
            <person name="Chiden Y."/>
            <person name="Hayashi M."/>
            <person name="Okamoto M."/>
            <person name="Ando T."/>
            <person name="Aoki H."/>
            <person name="Arita K."/>
            <person name="Hamada M."/>
            <person name="Harada C."/>
            <person name="Hijishita S."/>
            <person name="Honda M."/>
            <person name="Ichikawa Y."/>
            <person name="Idonuma A."/>
            <person name="Iijima M."/>
            <person name="Ikeda M."/>
            <person name="Ikeno M."/>
            <person name="Ito S."/>
            <person name="Ito T."/>
            <person name="Ito Y."/>
            <person name="Ito Y."/>
            <person name="Iwabuchi A."/>
            <person name="Kamiya K."/>
            <person name="Karasawa W."/>
            <person name="Katagiri S."/>
            <person name="Kikuta A."/>
            <person name="Kobayashi N."/>
            <person name="Kono I."/>
            <person name="Machita K."/>
            <person name="Maehara T."/>
            <person name="Mizuno H."/>
            <person name="Mizubayashi T."/>
            <person name="Mukai Y."/>
            <person name="Nagasaki H."/>
            <person name="Nakashima M."/>
            <person name="Nakama Y."/>
            <person name="Nakamichi Y."/>
            <person name="Nakamura M."/>
            <person name="Namiki N."/>
            <person name="Negishi M."/>
            <person name="Ohta I."/>
            <person name="Ono N."/>
            <person name="Saji S."/>
            <person name="Sakai K."/>
            <person name="Shibata M."/>
            <person name="Shimokawa T."/>
            <person name="Shomura A."/>
            <person name="Song J."/>
            <person name="Takazaki Y."/>
            <person name="Terasawa K."/>
            <person name="Tsuji K."/>
            <person name="Waki K."/>
            <person name="Yamagata H."/>
            <person name="Yamane H."/>
            <person name="Yoshiki S."/>
            <person name="Yoshihara R."/>
            <person name="Yukawa K."/>
            <person name="Zhong H."/>
            <person name="Iwama H."/>
            <person name="Endo T."/>
            <person name="Ito H."/>
            <person name="Hahn J.H."/>
            <person name="Kim H.-I."/>
            <person name="Eun M.-Y."/>
            <person name="Yano M."/>
            <person name="Jiang J."/>
            <person name="Gojobori T."/>
        </authorList>
    </citation>
    <scope>NUCLEOTIDE SEQUENCE [LARGE SCALE GENOMIC DNA]</scope>
    <source>
        <strain>cv. Nipponbare</strain>
    </source>
</reference>
<reference key="2">
    <citation type="journal article" date="2005" name="Nature">
        <title>The map-based sequence of the rice genome.</title>
        <authorList>
            <consortium name="International rice genome sequencing project (IRGSP)"/>
        </authorList>
    </citation>
    <scope>NUCLEOTIDE SEQUENCE [LARGE SCALE GENOMIC DNA]</scope>
    <source>
        <strain>cv. Nipponbare</strain>
    </source>
</reference>
<reference key="3">
    <citation type="journal article" date="2013" name="Rice">
        <title>Improvement of the Oryza sativa Nipponbare reference genome using next generation sequence and optical map data.</title>
        <authorList>
            <person name="Kawahara Y."/>
            <person name="de la Bastide M."/>
            <person name="Hamilton J.P."/>
            <person name="Kanamori H."/>
            <person name="McCombie W.R."/>
            <person name="Ouyang S."/>
            <person name="Schwartz D.C."/>
            <person name="Tanaka T."/>
            <person name="Wu J."/>
            <person name="Zhou S."/>
            <person name="Childs K.L."/>
            <person name="Davidson R.M."/>
            <person name="Lin H."/>
            <person name="Quesada-Ocampo L."/>
            <person name="Vaillancourt B."/>
            <person name="Sakai H."/>
            <person name="Lee S.S."/>
            <person name="Kim J."/>
            <person name="Numa H."/>
            <person name="Itoh T."/>
            <person name="Buell C.R."/>
            <person name="Matsumoto T."/>
        </authorList>
    </citation>
    <scope>GENOME REANNOTATION</scope>
    <source>
        <strain>cv. Nipponbare</strain>
    </source>
</reference>
<reference key="4">
    <citation type="journal article" date="2006" name="Mol. Genet. Genomics">
        <title>Genome-wide analysis of the stress associated protein (SAP) gene family containing A20/AN1 zinc-finger(s) in rice and their phylogenetic relationship with Arabidopsis.</title>
        <authorList>
            <person name="Vij S."/>
            <person name="Tyagi A.K."/>
        </authorList>
    </citation>
    <scope>GENE FAMILY</scope>
    <scope>INDUCTION</scope>
</reference>
<feature type="chain" id="PRO_0000269876" description="Zinc finger AN1 domain-containing stress-associated protein 13">
    <location>
        <begin position="1"/>
        <end position="236"/>
    </location>
</feature>
<feature type="zinc finger region" description="AN1-type; degenerate" evidence="2">
    <location>
        <begin position="170"/>
        <end position="216"/>
    </location>
</feature>
<feature type="region of interest" description="Disordered" evidence="3">
    <location>
        <begin position="48"/>
        <end position="81"/>
    </location>
</feature>
<feature type="region of interest" description="Disordered" evidence="3">
    <location>
        <begin position="150"/>
        <end position="173"/>
    </location>
</feature>
<feature type="compositionally biased region" description="Polar residues" evidence="3">
    <location>
        <begin position="66"/>
        <end position="75"/>
    </location>
</feature>
<feature type="binding site" evidence="2">
    <location>
        <position position="176"/>
    </location>
    <ligand>
        <name>Zn(2+)</name>
        <dbReference type="ChEBI" id="CHEBI:29105"/>
    </ligand>
</feature>
<feature type="binding site" evidence="2">
    <location>
        <position position="179"/>
    </location>
    <ligand>
        <name>Zn(2+)</name>
        <dbReference type="ChEBI" id="CHEBI:29105"/>
    </ligand>
</feature>
<feature type="binding site" evidence="2">
    <location>
        <position position="197"/>
    </location>
    <ligand>
        <name>Zn(2+)</name>
        <dbReference type="ChEBI" id="CHEBI:29105"/>
    </ligand>
</feature>
<feature type="binding site" evidence="2">
    <location>
        <position position="200"/>
    </location>
    <ligand>
        <name>Zn(2+)</name>
        <dbReference type="ChEBI" id="CHEBI:29105"/>
    </ligand>
</feature>
<evidence type="ECO:0000250" key="1"/>
<evidence type="ECO:0000255" key="2">
    <source>
        <dbReference type="PROSITE-ProRule" id="PRU00449"/>
    </source>
</evidence>
<evidence type="ECO:0000256" key="3">
    <source>
        <dbReference type="SAM" id="MobiDB-lite"/>
    </source>
</evidence>
<evidence type="ECO:0000269" key="4">
    <source>
    </source>
</evidence>
<protein>
    <recommendedName>
        <fullName>Zinc finger AN1 domain-containing stress-associated protein 13</fullName>
        <shortName>OsSAP13</shortName>
    </recommendedName>
</protein>
<accession>Q5JLA7</accession>
<gene>
    <name type="primary">SAP13</name>
    <name type="ordered locus">Os01g0717601</name>
    <name type="ordered locus">LOC_Os01g51990</name>
    <name type="ORF">P0480C01.4</name>
    <name type="ORF">P0683B11.29</name>
</gene>
<organism>
    <name type="scientific">Oryza sativa subsp. japonica</name>
    <name type="common">Rice</name>
    <dbReference type="NCBI Taxonomy" id="39947"/>
    <lineage>
        <taxon>Eukaryota</taxon>
        <taxon>Viridiplantae</taxon>
        <taxon>Streptophyta</taxon>
        <taxon>Embryophyta</taxon>
        <taxon>Tracheophyta</taxon>
        <taxon>Spermatophyta</taxon>
        <taxon>Magnoliopsida</taxon>
        <taxon>Liliopsida</taxon>
        <taxon>Poales</taxon>
        <taxon>Poaceae</taxon>
        <taxon>BOP clade</taxon>
        <taxon>Oryzoideae</taxon>
        <taxon>Oryzeae</taxon>
        <taxon>Oryzinae</taxon>
        <taxon>Oryza</taxon>
        <taxon>Oryza sativa</taxon>
    </lineage>
</organism>
<comment type="function">
    <text evidence="1">May be involved in environmental stress response.</text>
</comment>
<comment type="induction">
    <text evidence="4">By cold, dehydration and salt stress.</text>
</comment>
<name>SAP13_ORYSJ</name>